<gene>
    <name type="ordered locus">NTHI1684</name>
</gene>
<name>Y1684_HAEI8</name>
<feature type="chain" id="PRO_0000375308" description="YcgL domain-containing protein NTHI1684">
    <location>
        <begin position="1"/>
        <end position="88"/>
    </location>
</feature>
<feature type="domain" description="YcgL" evidence="1">
    <location>
        <begin position="1"/>
        <end position="85"/>
    </location>
</feature>
<reference key="1">
    <citation type="journal article" date="2005" name="J. Bacteriol.">
        <title>Genomic sequence of an otitis media isolate of nontypeable Haemophilus influenzae: comparative study with H. influenzae serotype d, strain KW20.</title>
        <authorList>
            <person name="Harrison A."/>
            <person name="Dyer D.W."/>
            <person name="Gillaspy A."/>
            <person name="Ray W.C."/>
            <person name="Mungur R."/>
            <person name="Carson M.B."/>
            <person name="Zhong H."/>
            <person name="Gipson J."/>
            <person name="Gipson M."/>
            <person name="Johnson L.S."/>
            <person name="Lewis L."/>
            <person name="Bakaletz L.O."/>
            <person name="Munson R.S. Jr."/>
        </authorList>
    </citation>
    <scope>NUCLEOTIDE SEQUENCE [LARGE SCALE GENOMIC DNA]</scope>
    <source>
        <strain>86-028NP</strain>
    </source>
</reference>
<evidence type="ECO:0000255" key="1">
    <source>
        <dbReference type="HAMAP-Rule" id="MF_01866"/>
    </source>
</evidence>
<evidence type="ECO:0000305" key="2"/>
<accession>Q4QKH3</accession>
<comment type="sequence caution" evidence="2">
    <conflict type="erroneous initiation">
        <sequence resource="EMBL-CDS" id="AAX88474"/>
    </conflict>
</comment>
<dbReference type="EMBL" id="CP000057">
    <property type="protein sequence ID" value="AAX88474.1"/>
    <property type="status" value="ALT_INIT"/>
    <property type="molecule type" value="Genomic_DNA"/>
</dbReference>
<dbReference type="RefSeq" id="WP_005666870.1">
    <property type="nucleotide sequence ID" value="NC_007146.2"/>
</dbReference>
<dbReference type="SMR" id="Q4QKH3"/>
<dbReference type="KEGG" id="hit:NTHI1684"/>
<dbReference type="HOGENOM" id="CLU_155118_1_0_6"/>
<dbReference type="Proteomes" id="UP000002525">
    <property type="component" value="Chromosome"/>
</dbReference>
<dbReference type="Gene3D" id="3.10.510.20">
    <property type="entry name" value="YcgL domain"/>
    <property type="match status" value="1"/>
</dbReference>
<dbReference type="HAMAP" id="MF_01866">
    <property type="entry name" value="UPF0745"/>
    <property type="match status" value="1"/>
</dbReference>
<dbReference type="InterPro" id="IPR038068">
    <property type="entry name" value="YcgL-like_sf"/>
</dbReference>
<dbReference type="InterPro" id="IPR027354">
    <property type="entry name" value="YcgL_dom"/>
</dbReference>
<dbReference type="PANTHER" id="PTHR38109">
    <property type="entry name" value="PROTEIN YCGL"/>
    <property type="match status" value="1"/>
</dbReference>
<dbReference type="PANTHER" id="PTHR38109:SF1">
    <property type="entry name" value="PROTEIN YCGL"/>
    <property type="match status" value="1"/>
</dbReference>
<dbReference type="Pfam" id="PF05166">
    <property type="entry name" value="YcgL"/>
    <property type="match status" value="1"/>
</dbReference>
<dbReference type="SUPFAM" id="SSF160191">
    <property type="entry name" value="YcgL-like"/>
    <property type="match status" value="1"/>
</dbReference>
<dbReference type="PROSITE" id="PS51648">
    <property type="entry name" value="YCGL"/>
    <property type="match status" value="1"/>
</dbReference>
<sequence>MLCAIYKSKKKLGSYLYVANREDFSLVPSVLLEHFGKPELVMMFNLLGRKALYNVDCNEVLETIKRQGFYLQIAKQDDGLFNSLSEIK</sequence>
<proteinExistence type="inferred from homology"/>
<protein>
    <recommendedName>
        <fullName evidence="1">YcgL domain-containing protein NTHI1684</fullName>
    </recommendedName>
</protein>
<organism>
    <name type="scientific">Haemophilus influenzae (strain 86-028NP)</name>
    <dbReference type="NCBI Taxonomy" id="281310"/>
    <lineage>
        <taxon>Bacteria</taxon>
        <taxon>Pseudomonadati</taxon>
        <taxon>Pseudomonadota</taxon>
        <taxon>Gammaproteobacteria</taxon>
        <taxon>Pasteurellales</taxon>
        <taxon>Pasteurellaceae</taxon>
        <taxon>Haemophilus</taxon>
    </lineage>
</organism>